<organism>
    <name type="scientific">Thermoplasma volcanium (strain ATCC 51530 / DSM 4299 / JCM 9571 / NBRC 15438 / GSS1)</name>
    <dbReference type="NCBI Taxonomy" id="273116"/>
    <lineage>
        <taxon>Archaea</taxon>
        <taxon>Methanobacteriati</taxon>
        <taxon>Thermoplasmatota</taxon>
        <taxon>Thermoplasmata</taxon>
        <taxon>Thermoplasmatales</taxon>
        <taxon>Thermoplasmataceae</taxon>
        <taxon>Thermoplasma</taxon>
    </lineage>
</organism>
<proteinExistence type="inferred from homology"/>
<feature type="chain" id="PRO_0000136554" description="Probable phosphoheptose isomerase">
    <location>
        <begin position="1"/>
        <end position="196"/>
    </location>
</feature>
<feature type="domain" description="SIS" evidence="1">
    <location>
        <begin position="43"/>
        <end position="196"/>
    </location>
</feature>
<feature type="binding site" evidence="1">
    <location>
        <begin position="58"/>
        <end position="60"/>
    </location>
    <ligand>
        <name>substrate</name>
    </ligand>
</feature>
<feature type="binding site" evidence="1">
    <location>
        <position position="67"/>
    </location>
    <ligand>
        <name>Zn(2+)</name>
        <dbReference type="ChEBI" id="CHEBI:29105"/>
    </ligand>
</feature>
<feature type="binding site" evidence="1">
    <location>
        <position position="71"/>
    </location>
    <ligand>
        <name>substrate</name>
    </ligand>
</feature>
<feature type="binding site" evidence="1">
    <location>
        <position position="71"/>
    </location>
    <ligand>
        <name>Zn(2+)</name>
        <dbReference type="ChEBI" id="CHEBI:29105"/>
    </ligand>
</feature>
<feature type="binding site" evidence="1">
    <location>
        <begin position="100"/>
        <end position="101"/>
    </location>
    <ligand>
        <name>substrate</name>
    </ligand>
</feature>
<feature type="binding site" evidence="1">
    <location>
        <begin position="126"/>
        <end position="128"/>
    </location>
    <ligand>
        <name>substrate</name>
    </ligand>
</feature>
<feature type="binding site" evidence="1">
    <location>
        <position position="131"/>
    </location>
    <ligand>
        <name>substrate</name>
    </ligand>
</feature>
<feature type="binding site" evidence="1">
    <location>
        <position position="178"/>
    </location>
    <ligand>
        <name>substrate</name>
    </ligand>
</feature>
<feature type="binding site" evidence="1">
    <location>
        <position position="178"/>
    </location>
    <ligand>
        <name>Zn(2+)</name>
        <dbReference type="ChEBI" id="CHEBI:29105"/>
    </ligand>
</feature>
<feature type="binding site" evidence="1">
    <location>
        <position position="186"/>
    </location>
    <ligand>
        <name>Zn(2+)</name>
        <dbReference type="ChEBI" id="CHEBI:29105"/>
    </ligand>
</feature>
<comment type="function">
    <text evidence="1">Catalyzes the isomerization of sedoheptulose 7-phosphate in D-glycero-D-manno-heptose 7-phosphate.</text>
</comment>
<comment type="catalytic activity">
    <reaction evidence="1">
        <text>2 D-sedoheptulose 7-phosphate = D-glycero-alpha-D-manno-heptose 7-phosphate + D-glycero-beta-D-manno-heptose 7-phosphate</text>
        <dbReference type="Rhea" id="RHEA:27489"/>
        <dbReference type="ChEBI" id="CHEBI:57483"/>
        <dbReference type="ChEBI" id="CHEBI:60203"/>
        <dbReference type="ChEBI" id="CHEBI:60204"/>
        <dbReference type="EC" id="5.3.1.28"/>
    </reaction>
</comment>
<comment type="cofactor">
    <cofactor evidence="1">
        <name>Zn(2+)</name>
        <dbReference type="ChEBI" id="CHEBI:29105"/>
    </cofactor>
    <text evidence="1">Binds 1 zinc ion per subunit.</text>
</comment>
<comment type="pathway">
    <text evidence="1">Carbohydrate biosynthesis; D-glycero-D-manno-heptose 7-phosphate biosynthesis; D-glycero-alpha-D-manno-heptose 7-phosphate and D-glycero-beta-D-manno-heptose 7-phosphate from sedoheptulose 7-phosphate: step 1/1.</text>
</comment>
<comment type="subcellular location">
    <subcellularLocation>
        <location evidence="1">Cytoplasm</location>
    </subcellularLocation>
</comment>
<comment type="miscellaneous">
    <text evidence="1">The reaction produces a racemic mixture of D-glycero-alpha-D-manno-heptose 7-phosphate and D-glycero-beta-D-manno-heptose 7-phosphate.</text>
</comment>
<comment type="similarity">
    <text evidence="1">Belongs to the SIS family. GmhA subfamily.</text>
</comment>
<protein>
    <recommendedName>
        <fullName evidence="1">Probable phosphoheptose isomerase</fullName>
        <ecNumber evidence="1">5.3.1.28</ecNumber>
    </recommendedName>
    <alternativeName>
        <fullName evidence="1">Sedoheptulose 7-phosphate isomerase</fullName>
    </alternativeName>
</protein>
<evidence type="ECO:0000255" key="1">
    <source>
        <dbReference type="HAMAP-Rule" id="MF_00067"/>
    </source>
</evidence>
<reference key="1">
    <citation type="journal article" date="2000" name="Proc. Natl. Acad. Sci. U.S.A.">
        <title>Archaeal adaptation to higher temperatures revealed by genomic sequence of Thermoplasma volcanium.</title>
        <authorList>
            <person name="Kawashima T."/>
            <person name="Amano N."/>
            <person name="Koike H."/>
            <person name="Makino S."/>
            <person name="Higuchi S."/>
            <person name="Kawashima-Ohya Y."/>
            <person name="Watanabe K."/>
            <person name="Yamazaki M."/>
            <person name="Kanehori K."/>
            <person name="Kawamoto T."/>
            <person name="Nunoshiba T."/>
            <person name="Yamamoto Y."/>
            <person name="Aramaki H."/>
            <person name="Makino K."/>
            <person name="Suzuki M."/>
        </authorList>
    </citation>
    <scope>NUCLEOTIDE SEQUENCE [LARGE SCALE GENOMIC DNA]</scope>
    <source>
        <strain>ATCC 51530 / DSM 4299 / JCM 9571 / NBRC 15438 / GSS1</strain>
    </source>
</reference>
<accession>Q97A25</accession>
<name>GMHA_THEVO</name>
<gene>
    <name evidence="1" type="primary">gmhA</name>
    <name type="ordered locus">TV0985</name>
    <name type="ORF">TVG1006486</name>
</gene>
<sequence>MGRKDKYALIHYKLMDLSDYIEAGNKARRSIDLNHIEKIGRDIVNVFNSGGKLIVFGNGGSAADSQHFVAELSGHFSKERKALPAMALTVNTSALTAISNDYSYDVVFSRQLEAFAKPGDYVVGISTSGNSVNVVKGLERAKELGCKTLAMTGRSGGKIAKVAEEAIMIDSEVTSIIQEAHIAAIHMICSVIDSYY</sequence>
<dbReference type="EC" id="5.3.1.28" evidence="1"/>
<dbReference type="EMBL" id="BA000011">
    <property type="protein sequence ID" value="BAB60127.1"/>
    <property type="molecule type" value="Genomic_DNA"/>
</dbReference>
<dbReference type="SMR" id="Q97A25"/>
<dbReference type="STRING" id="273116.gene:9381777"/>
<dbReference type="PaxDb" id="273116-14325202"/>
<dbReference type="KEGG" id="tvo:TVG1006486"/>
<dbReference type="eggNOG" id="arCOG05355">
    <property type="taxonomic scope" value="Archaea"/>
</dbReference>
<dbReference type="HOGENOM" id="CLU_080999_3_1_2"/>
<dbReference type="PhylomeDB" id="Q97A25"/>
<dbReference type="UniPathway" id="UPA00041">
    <property type="reaction ID" value="UER00436"/>
</dbReference>
<dbReference type="Proteomes" id="UP000001017">
    <property type="component" value="Chromosome"/>
</dbReference>
<dbReference type="GO" id="GO:0005737">
    <property type="term" value="C:cytoplasm"/>
    <property type="evidence" value="ECO:0007669"/>
    <property type="project" value="UniProtKB-SubCell"/>
</dbReference>
<dbReference type="GO" id="GO:0097367">
    <property type="term" value="F:carbohydrate derivative binding"/>
    <property type="evidence" value="ECO:0007669"/>
    <property type="project" value="InterPro"/>
</dbReference>
<dbReference type="GO" id="GO:0008968">
    <property type="term" value="F:D-sedoheptulose 7-phosphate isomerase activity"/>
    <property type="evidence" value="ECO:0007669"/>
    <property type="project" value="UniProtKB-UniRule"/>
</dbReference>
<dbReference type="GO" id="GO:0008270">
    <property type="term" value="F:zinc ion binding"/>
    <property type="evidence" value="ECO:0007669"/>
    <property type="project" value="UniProtKB-UniRule"/>
</dbReference>
<dbReference type="GO" id="GO:0005975">
    <property type="term" value="P:carbohydrate metabolic process"/>
    <property type="evidence" value="ECO:0007669"/>
    <property type="project" value="UniProtKB-UniRule"/>
</dbReference>
<dbReference type="GO" id="GO:2001061">
    <property type="term" value="P:D-glycero-D-manno-heptose 7-phosphate biosynthetic process"/>
    <property type="evidence" value="ECO:0007669"/>
    <property type="project" value="UniProtKB-UniPathway"/>
</dbReference>
<dbReference type="CDD" id="cd05006">
    <property type="entry name" value="SIS_GmhA"/>
    <property type="match status" value="1"/>
</dbReference>
<dbReference type="Gene3D" id="3.40.50.10490">
    <property type="entry name" value="Glucose-6-phosphate isomerase like protein, domain 1"/>
    <property type="match status" value="1"/>
</dbReference>
<dbReference type="HAMAP" id="MF_00067">
    <property type="entry name" value="GmhA"/>
    <property type="match status" value="1"/>
</dbReference>
<dbReference type="InterPro" id="IPR035461">
    <property type="entry name" value="GmhA/DiaA"/>
</dbReference>
<dbReference type="InterPro" id="IPR004515">
    <property type="entry name" value="Phosphoheptose_Isoase"/>
</dbReference>
<dbReference type="InterPro" id="IPR001347">
    <property type="entry name" value="SIS_dom"/>
</dbReference>
<dbReference type="InterPro" id="IPR046348">
    <property type="entry name" value="SIS_dom_sf"/>
</dbReference>
<dbReference type="InterPro" id="IPR050099">
    <property type="entry name" value="SIS_GmhA/DiaA_subfam"/>
</dbReference>
<dbReference type="PANTHER" id="PTHR30390:SF6">
    <property type="entry name" value="DNAA INITIATOR-ASSOCIATING PROTEIN DIAA"/>
    <property type="match status" value="1"/>
</dbReference>
<dbReference type="PANTHER" id="PTHR30390">
    <property type="entry name" value="SEDOHEPTULOSE 7-PHOSPHATE ISOMERASE / DNAA INITIATOR-ASSOCIATING FACTOR FOR REPLICATION INITIATION"/>
    <property type="match status" value="1"/>
</dbReference>
<dbReference type="Pfam" id="PF13580">
    <property type="entry name" value="SIS_2"/>
    <property type="match status" value="1"/>
</dbReference>
<dbReference type="SUPFAM" id="SSF53697">
    <property type="entry name" value="SIS domain"/>
    <property type="match status" value="1"/>
</dbReference>
<dbReference type="PROSITE" id="PS51464">
    <property type="entry name" value="SIS"/>
    <property type="match status" value="1"/>
</dbReference>
<keyword id="KW-0119">Carbohydrate metabolism</keyword>
<keyword id="KW-0963">Cytoplasm</keyword>
<keyword id="KW-0413">Isomerase</keyword>
<keyword id="KW-0479">Metal-binding</keyword>
<keyword id="KW-0862">Zinc</keyword>